<dbReference type="GO" id="GO:0005576">
    <property type="term" value="C:extracellular region"/>
    <property type="evidence" value="ECO:0007669"/>
    <property type="project" value="UniProtKB-SubCell"/>
</dbReference>
<dbReference type="GO" id="GO:0007218">
    <property type="term" value="P:neuropeptide signaling pathway"/>
    <property type="evidence" value="ECO:0007669"/>
    <property type="project" value="UniProtKB-KW"/>
</dbReference>
<keyword id="KW-0027">Amidation</keyword>
<keyword id="KW-0903">Direct protein sequencing</keyword>
<keyword id="KW-0527">Neuropeptide</keyword>
<keyword id="KW-0964">Secreted</keyword>
<proteinExistence type="evidence at protein level"/>
<evidence type="ECO:0000255" key="1"/>
<evidence type="ECO:0000269" key="2">
    <source>
    </source>
</evidence>
<evidence type="ECO:0000303" key="3">
    <source>
    </source>
</evidence>
<evidence type="ECO:0000305" key="4"/>
<organism>
    <name type="scientific">Lucilia cuprina</name>
    <name type="common">Green bottle fly</name>
    <name type="synonym">Australian sheep blowfly</name>
    <dbReference type="NCBI Taxonomy" id="7375"/>
    <lineage>
        <taxon>Eukaryota</taxon>
        <taxon>Metazoa</taxon>
        <taxon>Ecdysozoa</taxon>
        <taxon>Arthropoda</taxon>
        <taxon>Hexapoda</taxon>
        <taxon>Insecta</taxon>
        <taxon>Pterygota</taxon>
        <taxon>Neoptera</taxon>
        <taxon>Endopterygota</taxon>
        <taxon>Diptera</taxon>
        <taxon>Brachycera</taxon>
        <taxon>Muscomorpha</taxon>
        <taxon>Oestroidea</taxon>
        <taxon>Calliphoridae</taxon>
        <taxon>Luciliinae</taxon>
        <taxon>Lucilia</taxon>
    </lineage>
</organism>
<comment type="subcellular location">
    <subcellularLocation>
        <location evidence="4">Secreted</location>
    </subcellularLocation>
</comment>
<comment type="tissue specificity">
    <text evidence="2">Detected in the thoracic perisympathetic organs in larvae, and the dorsal ganglionic sheath in adults (at protein level).</text>
</comment>
<comment type="mass spectrometry" mass="1128.53" method="MALDI" evidence="2"/>
<comment type="similarity">
    <text evidence="1">Belongs to the FARP (FMRFamide related peptide) family.</text>
</comment>
<accession>P85453</accession>
<protein>
    <recommendedName>
        <fullName>FMRFamide-6</fullName>
    </recommendedName>
    <alternativeName>
        <fullName evidence="3">LucFMRFamide-6</fullName>
    </alternativeName>
</protein>
<feature type="peptide" id="PRO_0000371751" description="FMRFamide-6">
    <location>
        <begin position="1"/>
        <end position="10"/>
    </location>
</feature>
<feature type="modified residue" description="Phenylalanine amide" evidence="2">
    <location>
        <position position="10"/>
    </location>
</feature>
<name>FAR6_LUCCU</name>
<sequence length="10" mass="1129">AAASDNFMRF</sequence>
<reference evidence="4" key="1">
    <citation type="journal article" date="2009" name="Gen. Comp. Endocrinol.">
        <title>Extended FMRFamides in dipteran insects: conservative expression in the neuroendocrine system is accompanied by rapid sequence evolution.</title>
        <authorList>
            <person name="Rahman M.M."/>
            <person name="Fromm B."/>
            <person name="Neupert S."/>
            <person name="Kreusch S."/>
            <person name="Predel R."/>
        </authorList>
    </citation>
    <scope>PROTEIN SEQUENCE</scope>
    <scope>TISSUE SPECIFICITY</scope>
    <scope>MASS SPECTROMETRY</scope>
    <scope>AMIDATION AT PHE-10</scope>
    <source>
        <strain evidence="2">Bangladesh</strain>
        <strain evidence="2">Goondiwindi</strain>
        <tissue evidence="2">Dorsal ganglionic sheath</tissue>
    </source>
</reference>